<comment type="subcellular location">
    <subcellularLocation>
        <location evidence="3">Membrane</location>
        <topology evidence="3">Multi-pass membrane protein</topology>
    </subcellularLocation>
</comment>
<name>P5I11_BOVIN</name>
<keyword id="KW-0472">Membrane</keyword>
<keyword id="KW-0597">Phosphoprotein</keyword>
<keyword id="KW-1185">Reference proteome</keyword>
<keyword id="KW-0812">Transmembrane</keyword>
<keyword id="KW-1133">Transmembrane helix</keyword>
<feature type="chain" id="PRO_0000395040" description="Tumor protein p53-inducible protein 11">
    <location>
        <begin position="1"/>
        <end position="189"/>
    </location>
</feature>
<feature type="topological domain" description="Cytoplasmic" evidence="2">
    <location>
        <begin position="1"/>
        <end position="63"/>
    </location>
</feature>
<feature type="transmembrane region" description="Helical" evidence="2">
    <location>
        <begin position="64"/>
        <end position="84"/>
    </location>
</feature>
<feature type="topological domain" description="Extracellular" evidence="2">
    <location>
        <begin position="85"/>
        <end position="108"/>
    </location>
</feature>
<feature type="transmembrane region" description="Helical" evidence="2">
    <location>
        <begin position="109"/>
        <end position="129"/>
    </location>
</feature>
<feature type="topological domain" description="Cytoplasmic" evidence="2">
    <location>
        <position position="130"/>
    </location>
</feature>
<feature type="transmembrane region" description="Helical" evidence="2">
    <location>
        <begin position="131"/>
        <end position="151"/>
    </location>
</feature>
<feature type="topological domain" description="Extracellular" evidence="2">
    <location>
        <begin position="152"/>
        <end position="159"/>
    </location>
</feature>
<feature type="transmembrane region" description="Helical" evidence="2">
    <location>
        <begin position="160"/>
        <end position="180"/>
    </location>
</feature>
<feature type="topological domain" description="Cytoplasmic" evidence="2">
    <location>
        <begin position="181"/>
        <end position="189"/>
    </location>
</feature>
<feature type="modified residue" description="Phosphoserine" evidence="1">
    <location>
        <position position="14"/>
    </location>
</feature>
<dbReference type="EMBL" id="BC120050">
    <property type="protein sequence ID" value="AAI20051.1"/>
    <property type="molecule type" value="mRNA"/>
</dbReference>
<dbReference type="RefSeq" id="NP_001069193.1">
    <property type="nucleotide sequence ID" value="NM_001075725.2"/>
</dbReference>
<dbReference type="FunCoup" id="Q0VCQ8">
    <property type="interactions" value="477"/>
</dbReference>
<dbReference type="STRING" id="9913.ENSBTAP00000069417"/>
<dbReference type="PaxDb" id="9913-ENSBTAP00000041716"/>
<dbReference type="Ensembl" id="ENSBTAT00000079529.1">
    <property type="protein sequence ID" value="ENSBTAP00000069417.1"/>
    <property type="gene ID" value="ENSBTAG00000017228.7"/>
</dbReference>
<dbReference type="GeneID" id="515682"/>
<dbReference type="KEGG" id="bta:515682"/>
<dbReference type="CTD" id="9537"/>
<dbReference type="VEuPathDB" id="HostDB:ENSBTAG00000017228"/>
<dbReference type="VGNC" id="VGNC:106992">
    <property type="gene designation" value="TP53I11"/>
</dbReference>
<dbReference type="eggNOG" id="ENOG502QQ2K">
    <property type="taxonomic scope" value="Eukaryota"/>
</dbReference>
<dbReference type="GeneTree" id="ENSGT00390000017249"/>
<dbReference type="InParanoid" id="Q0VCQ8"/>
<dbReference type="OMA" id="CYCAMAS"/>
<dbReference type="OrthoDB" id="6243248at2759"/>
<dbReference type="Proteomes" id="UP000009136">
    <property type="component" value="Chromosome 15"/>
</dbReference>
<dbReference type="Bgee" id="ENSBTAG00000017228">
    <property type="expression patterns" value="Expressed in adenohypophysis and 106 other cell types or tissues"/>
</dbReference>
<dbReference type="GO" id="GO:0016020">
    <property type="term" value="C:membrane"/>
    <property type="evidence" value="ECO:0007669"/>
    <property type="project" value="UniProtKB-SubCell"/>
</dbReference>
<dbReference type="InterPro" id="IPR028266">
    <property type="entry name" value="TP53I11"/>
</dbReference>
<dbReference type="PANTHER" id="PTHR31584">
    <property type="entry name" value="TUMOR PROTEIN P53-INDUCIBLE PROTEIN 11"/>
    <property type="match status" value="1"/>
</dbReference>
<dbReference type="PANTHER" id="PTHR31584:SF1">
    <property type="entry name" value="TUMOR PROTEIN P53-INDUCIBLE PROTEIN 11"/>
    <property type="match status" value="1"/>
</dbReference>
<dbReference type="Pfam" id="PF14936">
    <property type="entry name" value="p53-inducible11"/>
    <property type="match status" value="1"/>
</dbReference>
<proteinExistence type="evidence at transcript level"/>
<protein>
    <recommendedName>
        <fullName>Tumor protein p53-inducible protein 11</fullName>
    </recommendedName>
    <alternativeName>
        <fullName>p53-induced gene 11 protein</fullName>
    </alternativeName>
</protein>
<organism>
    <name type="scientific">Bos taurus</name>
    <name type="common">Bovine</name>
    <dbReference type="NCBI Taxonomy" id="9913"/>
    <lineage>
        <taxon>Eukaryota</taxon>
        <taxon>Metazoa</taxon>
        <taxon>Chordata</taxon>
        <taxon>Craniata</taxon>
        <taxon>Vertebrata</taxon>
        <taxon>Euteleostomi</taxon>
        <taxon>Mammalia</taxon>
        <taxon>Eutheria</taxon>
        <taxon>Laurasiatheria</taxon>
        <taxon>Artiodactyla</taxon>
        <taxon>Ruminantia</taxon>
        <taxon>Pecora</taxon>
        <taxon>Bovidae</taxon>
        <taxon>Bovinae</taxon>
        <taxon>Bos</taxon>
    </lineage>
</organism>
<accession>Q0VCQ8</accession>
<gene>
    <name type="primary">TP53I11</name>
    <name type="synonym">PIG11</name>
</gene>
<sequence length="189" mass="20925">MAAKQPPPLMKKHSQTDLVSRLKTRKILGVGGEDDDGEVHRSKISQVLGNEIKFAVREPLGLRVWQFVSAVLFSGIAIMALAFPDQLYDAVFDGAQVTSKTPIRLYGGALLSISLIMWNALYTAEKVIIRWTLLTEACYFSVQFLVVTATLAETGLASQGILLLLASRLLFVAISVYYYYQVGRKPKKV</sequence>
<evidence type="ECO:0000250" key="1">
    <source>
        <dbReference type="UniProtKB" id="O14683"/>
    </source>
</evidence>
<evidence type="ECO:0000255" key="2"/>
<evidence type="ECO:0000305" key="3"/>
<reference key="1">
    <citation type="submission" date="2006-08" db="EMBL/GenBank/DDBJ databases">
        <authorList>
            <consortium name="NIH - Mammalian Gene Collection (MGC) project"/>
        </authorList>
    </citation>
    <scope>NUCLEOTIDE SEQUENCE [LARGE SCALE MRNA]</scope>
    <source>
        <strain>Hereford</strain>
        <tissue>Fetal cerebellum</tissue>
    </source>
</reference>